<dbReference type="EMBL" id="Z29116">
    <property type="protein sequence ID" value="CAA82370.2"/>
    <property type="molecule type" value="Genomic_DNA"/>
</dbReference>
<dbReference type="PIR" id="S40738">
    <property type="entry name" value="S40738"/>
</dbReference>
<dbReference type="RefSeq" id="NP_499017.2">
    <property type="nucleotide sequence ID" value="NM_066616.6"/>
</dbReference>
<dbReference type="FunCoup" id="P34636">
    <property type="interactions" value="791"/>
</dbReference>
<dbReference type="STRING" id="6239.ZK507.4.1"/>
<dbReference type="PaxDb" id="6239-ZK507.4"/>
<dbReference type="EnsemblMetazoa" id="ZK507.4.1">
    <property type="protein sequence ID" value="ZK507.4.1"/>
    <property type="gene ID" value="WBGene00013980"/>
</dbReference>
<dbReference type="GeneID" id="191338"/>
<dbReference type="KEGG" id="cel:CELE_ZK507.4"/>
<dbReference type="AGR" id="WB:WBGene00013980"/>
<dbReference type="CTD" id="191338"/>
<dbReference type="WormBase" id="ZK507.4">
    <property type="protein sequence ID" value="CE38765"/>
    <property type="gene ID" value="WBGene00013980"/>
    <property type="gene designation" value="dos-1"/>
</dbReference>
<dbReference type="eggNOG" id="ENOG502TGQ3">
    <property type="taxonomic scope" value="Eukaryota"/>
</dbReference>
<dbReference type="HOGENOM" id="CLU_1338672_0_0_1"/>
<dbReference type="InParanoid" id="P34636"/>
<dbReference type="OMA" id="CKCEYEY"/>
<dbReference type="OrthoDB" id="5810033at2759"/>
<dbReference type="PhylomeDB" id="P34636"/>
<dbReference type="PRO" id="PR:P34636"/>
<dbReference type="Proteomes" id="UP000001940">
    <property type="component" value="Chromosome III"/>
</dbReference>
<dbReference type="Bgee" id="WBGene00013980">
    <property type="expression patterns" value="Expressed in adult organism and 2 other cell types or tissues"/>
</dbReference>
<dbReference type="GO" id="GO:0005615">
    <property type="term" value="C:extracellular space"/>
    <property type="evidence" value="ECO:0000318"/>
    <property type="project" value="GO_Central"/>
</dbReference>
<dbReference type="GO" id="GO:0005112">
    <property type="term" value="F:Notch binding"/>
    <property type="evidence" value="ECO:0000318"/>
    <property type="project" value="GO_Central"/>
</dbReference>
<dbReference type="GO" id="GO:0045747">
    <property type="term" value="P:positive regulation of Notch signaling pathway"/>
    <property type="evidence" value="ECO:0000318"/>
    <property type="project" value="GO_Central"/>
</dbReference>
<dbReference type="InterPro" id="IPR053124">
    <property type="entry name" value="Notch_signaling_modulators"/>
</dbReference>
<dbReference type="PANTHER" id="PTHR35015:SF2">
    <property type="entry name" value="DELTA AND OSM-11 HOMOLOG PROTEIN 1"/>
    <property type="match status" value="1"/>
</dbReference>
<dbReference type="PANTHER" id="PTHR35015">
    <property type="entry name" value="PROTEIN CBR-OSM-7-RELATED"/>
    <property type="match status" value="1"/>
</dbReference>
<organism>
    <name type="scientific">Caenorhabditis elegans</name>
    <dbReference type="NCBI Taxonomy" id="6239"/>
    <lineage>
        <taxon>Eukaryota</taxon>
        <taxon>Metazoa</taxon>
        <taxon>Ecdysozoa</taxon>
        <taxon>Nematoda</taxon>
        <taxon>Chromadorea</taxon>
        <taxon>Rhabditida</taxon>
        <taxon>Rhabditina</taxon>
        <taxon>Rhabditomorpha</taxon>
        <taxon>Rhabditoidea</taxon>
        <taxon>Rhabditidae</taxon>
        <taxon>Peloderinae</taxon>
        <taxon>Caenorhabditis</taxon>
    </lineage>
</organism>
<reference key="1">
    <citation type="journal article" date="1994" name="Nature">
        <title>2.2 Mb of contiguous nucleotide sequence from chromosome III of C. elegans.</title>
        <authorList>
            <person name="Wilson R."/>
            <person name="Ainscough R."/>
            <person name="Anderson K."/>
            <person name="Baynes C."/>
            <person name="Berks M."/>
            <person name="Bonfield J."/>
            <person name="Burton J."/>
            <person name="Connell M."/>
            <person name="Copsey T."/>
            <person name="Cooper J."/>
            <person name="Coulson A."/>
            <person name="Craxton M."/>
            <person name="Dear S."/>
            <person name="Du Z."/>
            <person name="Durbin R."/>
            <person name="Favello A."/>
            <person name="Fraser A."/>
            <person name="Fulton L."/>
            <person name="Gardner A."/>
            <person name="Green P."/>
            <person name="Hawkins T."/>
            <person name="Hillier L."/>
            <person name="Jier M."/>
            <person name="Johnston L."/>
            <person name="Jones M."/>
            <person name="Kershaw J."/>
            <person name="Kirsten J."/>
            <person name="Laisster N."/>
            <person name="Latreille P."/>
            <person name="Lightning J."/>
            <person name="Lloyd C."/>
            <person name="Mortimore B."/>
            <person name="O'Callaghan M."/>
            <person name="Parsons J."/>
            <person name="Percy C."/>
            <person name="Rifken L."/>
            <person name="Roopra A."/>
            <person name="Saunders D."/>
            <person name="Shownkeen R."/>
            <person name="Sims M."/>
            <person name="Smaldon N."/>
            <person name="Smith A."/>
            <person name="Smith M."/>
            <person name="Sonnhammer E."/>
            <person name="Staden R."/>
            <person name="Sulston J."/>
            <person name="Thierry-Mieg J."/>
            <person name="Thomas K."/>
            <person name="Vaudin M."/>
            <person name="Vaughan K."/>
            <person name="Waterston R."/>
            <person name="Watson A."/>
            <person name="Weinstock L."/>
            <person name="Wilkinson-Sproat J."/>
            <person name="Wohldman P."/>
        </authorList>
    </citation>
    <scope>NUCLEOTIDE SEQUENCE [LARGE SCALE GENOMIC DNA]</scope>
    <source>
        <strain>Bristol N2</strain>
    </source>
</reference>
<reference key="2">
    <citation type="journal article" date="1998" name="Science">
        <title>Genome sequence of the nematode C. elegans: a platform for investigating biology.</title>
        <authorList>
            <consortium name="The C. elegans sequencing consortium"/>
        </authorList>
    </citation>
    <scope>NUCLEOTIDE SEQUENCE [LARGE SCALE GENOMIC DNA]</scope>
    <source>
        <strain>Bristol N2</strain>
    </source>
</reference>
<feature type="chain" id="PRO_0000065517" description="Delta and osm-11 homolog protein 1">
    <location>
        <begin position="1"/>
        <end position="206"/>
    </location>
</feature>
<name>DOS1_CAEEL</name>
<protein>
    <recommendedName>
        <fullName>Delta and osm-11 homolog protein 1</fullName>
    </recommendedName>
</protein>
<proteinExistence type="predicted"/>
<gene>
    <name type="primary">dos-1</name>
    <name type="ORF">ZK507.4</name>
</gene>
<sequence length="206" mass="24567">MYSSVYLLLSIVFVGGSNAHDWDSFESHHSEPRLRTSNLDVGEYCATFHENYVYYCRGIWTAEKLLEHRSIMKKIGKFCPSYKSACVTRTRIDPEEERERKEDHKKELTDDVGDMAFDDLMRKLEKIVPCRPNCNVSVHPHCTRQCKCEYEYHRMQKWCKPPRIEERFKYFCRIWYMSCSTYIEELDPEMADAFVSQYANYGNYHG</sequence>
<accession>P34636</accession>
<keyword id="KW-1185">Reference proteome</keyword>